<comment type="function">
    <text>Involved in maceration and soft-rotting of plant tissue.</text>
</comment>
<comment type="catalytic activity">
    <reaction>
        <text>Eliminative cleavage of (1-&gt;4)-alpha-D-galacturonan to give oligosaccharides with 4-deoxy-alpha-D-galact-4-enuronosyl groups at their non-reducing ends.</text>
        <dbReference type="EC" id="4.2.2.2"/>
    </reaction>
</comment>
<comment type="cofactor">
    <cofactor>
        <name>Ca(2+)</name>
        <dbReference type="ChEBI" id="CHEBI:29108"/>
    </cofactor>
    <text>Binds 1 Ca(2+) ion per subunit.</text>
</comment>
<comment type="pathway">
    <text>Glycan metabolism; pectin degradation; 2-dehydro-3-deoxy-D-gluconate from pectin: step 2/5.</text>
</comment>
<comment type="subcellular location">
    <subcellularLocation>
        <location>Secreted</location>
    </subcellularLocation>
</comment>
<comment type="similarity">
    <text evidence="3">Belongs to the polysaccharide lyase 1 family. PLADES subfamily.</text>
</comment>
<organism>
    <name type="scientific">Dickeya chrysanthemi</name>
    <name type="common">Pectobacterium chrysanthemi</name>
    <name type="synonym">Erwinia chrysanthemi</name>
    <dbReference type="NCBI Taxonomy" id="556"/>
    <lineage>
        <taxon>Bacteria</taxon>
        <taxon>Pseudomonadati</taxon>
        <taxon>Pseudomonadota</taxon>
        <taxon>Gammaproteobacteria</taxon>
        <taxon>Enterobacterales</taxon>
        <taxon>Pectobacteriaceae</taxon>
        <taxon>Dickeya</taxon>
    </lineage>
</organism>
<protein>
    <recommendedName>
        <fullName>Pectate lyase A</fullName>
        <ecNumber>4.2.2.2</ecNumber>
    </recommendedName>
</protein>
<accession>P0C1A2</accession>
<accession>P29155</accession>
<proteinExistence type="evidence at protein level"/>
<evidence type="ECO:0000250" key="1"/>
<evidence type="ECO:0000255" key="2"/>
<evidence type="ECO:0000305" key="3"/>
<evidence type="ECO:0007829" key="4">
    <source>
        <dbReference type="PDB" id="1JRG"/>
    </source>
</evidence>
<evidence type="ECO:0007829" key="5">
    <source>
        <dbReference type="PDB" id="1OOC"/>
    </source>
</evidence>
<evidence type="ECO:0007829" key="6">
    <source>
        <dbReference type="PDB" id="1PE9"/>
    </source>
</evidence>
<feature type="signal peptide" evidence="2">
    <location>
        <begin position="1"/>
        <end position="32"/>
    </location>
</feature>
<feature type="chain" id="PRO_0000024852" description="Pectate lyase A">
    <location>
        <begin position="33"/>
        <end position="393"/>
    </location>
</feature>
<feature type="active site" evidence="2">
    <location>
        <position position="273"/>
    </location>
</feature>
<feature type="binding site" evidence="1">
    <location>
        <position position="174"/>
    </location>
    <ligand>
        <name>Ca(2+)</name>
        <dbReference type="ChEBI" id="CHEBI:29108"/>
    </ligand>
</feature>
<feature type="binding site" evidence="1">
    <location>
        <position position="176"/>
    </location>
    <ligand>
        <name>Ca(2+)</name>
        <dbReference type="ChEBI" id="CHEBI:29108"/>
    </ligand>
</feature>
<feature type="binding site" evidence="1">
    <location>
        <position position="216"/>
    </location>
    <ligand>
        <name>Ca(2+)</name>
        <dbReference type="ChEBI" id="CHEBI:29108"/>
    </ligand>
</feature>
<feature type="binding site" evidence="1">
    <location>
        <position position="220"/>
    </location>
    <ligand>
        <name>Ca(2+)</name>
        <dbReference type="ChEBI" id="CHEBI:29108"/>
    </ligand>
</feature>
<feature type="disulfide bond">
    <location>
        <begin position="330"/>
        <end position="358"/>
    </location>
</feature>
<feature type="turn" evidence="6">
    <location>
        <begin position="38"/>
        <end position="41"/>
    </location>
</feature>
<feature type="strand" evidence="6">
    <location>
        <begin position="46"/>
        <end position="48"/>
    </location>
</feature>
<feature type="helix" evidence="6">
    <location>
        <begin position="49"/>
        <end position="51"/>
    </location>
</feature>
<feature type="strand" evidence="6">
    <location>
        <begin position="52"/>
        <end position="54"/>
    </location>
</feature>
<feature type="turn" evidence="6">
    <location>
        <begin position="58"/>
        <end position="61"/>
    </location>
</feature>
<feature type="helix" evidence="6">
    <location>
        <begin position="64"/>
        <end position="66"/>
    </location>
</feature>
<feature type="strand" evidence="6">
    <location>
        <begin position="67"/>
        <end position="70"/>
    </location>
</feature>
<feature type="helix" evidence="6">
    <location>
        <begin position="73"/>
        <end position="80"/>
    </location>
</feature>
<feature type="turn" evidence="6">
    <location>
        <begin position="81"/>
        <end position="84"/>
    </location>
</feature>
<feature type="strand" evidence="6">
    <location>
        <begin position="87"/>
        <end position="91"/>
    </location>
</feature>
<feature type="strand" evidence="6">
    <location>
        <begin position="93"/>
        <end position="96"/>
    </location>
</feature>
<feature type="turn" evidence="6">
    <location>
        <begin position="97"/>
        <end position="100"/>
    </location>
</feature>
<feature type="helix" evidence="6">
    <location>
        <begin position="106"/>
        <end position="112"/>
    </location>
</feature>
<feature type="strand" evidence="6">
    <location>
        <begin position="113"/>
        <end position="116"/>
    </location>
</feature>
<feature type="strand" evidence="6">
    <location>
        <begin position="119"/>
        <end position="125"/>
    </location>
</feature>
<feature type="strand" evidence="6">
    <location>
        <begin position="131"/>
        <end position="140"/>
    </location>
</feature>
<feature type="helix" evidence="6">
    <location>
        <begin position="141"/>
        <end position="143"/>
    </location>
</feature>
<feature type="strand" evidence="6">
    <location>
        <begin position="146"/>
        <end position="152"/>
    </location>
</feature>
<feature type="strand" evidence="6">
    <location>
        <begin position="154"/>
        <end position="156"/>
    </location>
</feature>
<feature type="strand" evidence="6">
    <location>
        <begin position="164"/>
        <end position="166"/>
    </location>
</feature>
<feature type="turn" evidence="6">
    <location>
        <begin position="167"/>
        <end position="169"/>
    </location>
</feature>
<feature type="strand" evidence="6">
    <location>
        <begin position="170"/>
        <end position="172"/>
    </location>
</feature>
<feature type="strand" evidence="6">
    <location>
        <begin position="177"/>
        <end position="181"/>
    </location>
</feature>
<feature type="strand" evidence="6">
    <location>
        <begin position="185"/>
        <end position="191"/>
    </location>
</feature>
<feature type="strand" evidence="6">
    <location>
        <begin position="193"/>
        <end position="195"/>
    </location>
</feature>
<feature type="helix" evidence="6">
    <location>
        <begin position="201"/>
        <end position="203"/>
    </location>
</feature>
<feature type="strand" evidence="5">
    <location>
        <begin position="205"/>
        <end position="207"/>
    </location>
</feature>
<feature type="strand" evidence="5">
    <location>
        <begin position="210"/>
        <end position="212"/>
    </location>
</feature>
<feature type="strand" evidence="6">
    <location>
        <begin position="218"/>
        <end position="221"/>
    </location>
</feature>
<feature type="strand" evidence="6">
    <location>
        <begin position="226"/>
        <end position="232"/>
    </location>
</feature>
<feature type="strand" evidence="6">
    <location>
        <begin position="234"/>
        <end position="240"/>
    </location>
</feature>
<feature type="strand" evidence="6">
    <location>
        <begin position="242"/>
        <end position="245"/>
    </location>
</feature>
<feature type="helix" evidence="6">
    <location>
        <begin position="251"/>
        <end position="254"/>
    </location>
</feature>
<feature type="strand" evidence="6">
    <location>
        <begin position="259"/>
        <end position="264"/>
    </location>
</feature>
<feature type="strand" evidence="6">
    <location>
        <begin position="266"/>
        <end position="272"/>
    </location>
</feature>
<feature type="strand" evidence="6">
    <location>
        <begin position="274"/>
        <end position="279"/>
    </location>
</feature>
<feature type="strand" evidence="6">
    <location>
        <begin position="281"/>
        <end position="286"/>
    </location>
</feature>
<feature type="strand" evidence="6">
    <location>
        <begin position="288"/>
        <end position="292"/>
    </location>
</feature>
<feature type="strand" evidence="6">
    <location>
        <begin position="296"/>
        <end position="298"/>
    </location>
</feature>
<feature type="strand" evidence="6">
    <location>
        <begin position="303"/>
        <end position="306"/>
    </location>
</feature>
<feature type="strand" evidence="6">
    <location>
        <begin position="311"/>
        <end position="316"/>
    </location>
</feature>
<feature type="strand" evidence="6">
    <location>
        <begin position="318"/>
        <end position="322"/>
    </location>
</feature>
<feature type="helix" evidence="6">
    <location>
        <begin position="326"/>
        <end position="332"/>
    </location>
</feature>
<feature type="strand" evidence="6">
    <location>
        <begin position="333"/>
        <end position="337"/>
    </location>
</feature>
<feature type="strand" evidence="6">
    <location>
        <begin position="340"/>
        <end position="345"/>
    </location>
</feature>
<feature type="strand" evidence="4">
    <location>
        <begin position="356"/>
        <end position="359"/>
    </location>
</feature>
<feature type="helix" evidence="6">
    <location>
        <begin position="378"/>
        <end position="387"/>
    </location>
</feature>
<keyword id="KW-0002">3D-structure</keyword>
<keyword id="KW-0106">Calcium</keyword>
<keyword id="KW-1015">Disulfide bond</keyword>
<keyword id="KW-0456">Lyase</keyword>
<keyword id="KW-0479">Metal-binding</keyword>
<keyword id="KW-0677">Repeat</keyword>
<keyword id="KW-0964">Secreted</keyword>
<keyword id="KW-0732">Signal</keyword>
<name>PLYA_DICCH</name>
<reference key="1">
    <citation type="journal article" date="1988" name="J. Bacteriol.">
        <title>Structure and organization of the pel genes from Erwinia chrysanthemi EC16.</title>
        <authorList>
            <person name="Tamaki S.J."/>
            <person name="Gold S."/>
            <person name="Robeson M."/>
            <person name="Manulis S."/>
            <person name="Keen N.T."/>
        </authorList>
    </citation>
    <scope>NUCLEOTIDE SEQUENCE [GENOMIC DNA]</scope>
    <source>
        <strain>EC16</strain>
    </source>
</reference>
<reference key="2">
    <citation type="journal article" date="2002" name="Acta Crystallogr. D">
        <title>Structure of pectate lyase A: comparison to other isoforms.</title>
        <authorList>
            <person name="Thomas L.M."/>
            <person name="Doan C.N."/>
            <person name="Oliver R.L."/>
            <person name="Yoder M.D."/>
        </authorList>
    </citation>
    <scope>X-RAY CRYSTALLOGRAPHY (2.1 ANGSTROMS) OF 33-393</scope>
</reference>
<gene>
    <name type="primary">pelA</name>
</gene>
<sequence>MMNKASGRSFTRSSKYLLATLIAGMMASGVSAAELVSDKALESAPTVGWASQNGFTTGGAAATSDNIYIVTNISEFTSALSAGAEAKIIQIKGTIDISGGTPYTDFADQKARSQINIPANTTVIGLGTDAKFINGSLIIDGTDGTNNVIIRNVYIQTPIDVEPHYEKGDGWNAEWDAMNITNGAHHVWIDHVTISDGNFTDDMYTTKDGETYVQHDGALDIKRGSDYVTISNSLIDQHDKTMLIGHNDTNSAQDKGKLHVTLFNNVFNRVTERAPRVRYGSIHSFNNVFKGDAKDPVYRYQYSFGIGTSGSVLSEGNSFTIANLSASKACKVVKKFNGSIFSDNGSVLNGSAVDLSGCGFSAYTSKIPYIYDVQPMTTELAQSITDNAGSGKL</sequence>
<dbReference type="EC" id="4.2.2.2"/>
<dbReference type="EMBL" id="M14509">
    <property type="protein sequence ID" value="AAA24843.1"/>
    <property type="molecule type" value="Genomic_DNA"/>
</dbReference>
<dbReference type="PIR" id="B31091">
    <property type="entry name" value="WZWC6A"/>
</dbReference>
<dbReference type="PDB" id="1JRG">
    <property type="method" value="X-ray"/>
    <property type="resolution" value="2.10 A"/>
    <property type="chains" value="A/B=33-393"/>
</dbReference>
<dbReference type="PDB" id="1JTA">
    <property type="method" value="X-ray"/>
    <property type="resolution" value="1.80 A"/>
    <property type="chains" value="A=33-393"/>
</dbReference>
<dbReference type="PDB" id="1OOC">
    <property type="method" value="X-ray"/>
    <property type="resolution" value="2.94 A"/>
    <property type="chains" value="A/B=33-393"/>
</dbReference>
<dbReference type="PDB" id="1PE9">
    <property type="method" value="X-ray"/>
    <property type="resolution" value="1.60 A"/>
    <property type="chains" value="A/B=33-393"/>
</dbReference>
<dbReference type="PDBsum" id="1JRG"/>
<dbReference type="PDBsum" id="1JTA"/>
<dbReference type="PDBsum" id="1OOC"/>
<dbReference type="PDBsum" id="1PE9"/>
<dbReference type="SMR" id="P0C1A2"/>
<dbReference type="CAZy" id="PL1">
    <property type="family name" value="Polysaccharide Lyase Family 1"/>
</dbReference>
<dbReference type="BRENDA" id="4.2.2.2">
    <property type="organism ID" value="2141"/>
</dbReference>
<dbReference type="UniPathway" id="UPA00545">
    <property type="reaction ID" value="UER00824"/>
</dbReference>
<dbReference type="EvolutionaryTrace" id="P0C1A2"/>
<dbReference type="GO" id="GO:0005576">
    <property type="term" value="C:extracellular region"/>
    <property type="evidence" value="ECO:0007669"/>
    <property type="project" value="UniProtKB-SubCell"/>
</dbReference>
<dbReference type="GO" id="GO:0046872">
    <property type="term" value="F:metal ion binding"/>
    <property type="evidence" value="ECO:0007669"/>
    <property type="project" value="UniProtKB-KW"/>
</dbReference>
<dbReference type="GO" id="GO:0030570">
    <property type="term" value="F:pectate lyase activity"/>
    <property type="evidence" value="ECO:0007669"/>
    <property type="project" value="UniProtKB-EC"/>
</dbReference>
<dbReference type="GO" id="GO:0045490">
    <property type="term" value="P:pectin catabolic process"/>
    <property type="evidence" value="ECO:0007669"/>
    <property type="project" value="UniProtKB-UniPathway"/>
</dbReference>
<dbReference type="Gene3D" id="2.160.20.10">
    <property type="entry name" value="Single-stranded right-handed beta-helix, Pectin lyase-like"/>
    <property type="match status" value="1"/>
</dbReference>
<dbReference type="InterPro" id="IPR002022">
    <property type="entry name" value="Pec_lyase"/>
</dbReference>
<dbReference type="InterPro" id="IPR012334">
    <property type="entry name" value="Pectin_lyas_fold"/>
</dbReference>
<dbReference type="InterPro" id="IPR011050">
    <property type="entry name" value="Pectin_lyase_fold/virulence"/>
</dbReference>
<dbReference type="InterPro" id="IPR045032">
    <property type="entry name" value="PEL"/>
</dbReference>
<dbReference type="PANTHER" id="PTHR31683">
    <property type="entry name" value="PECTATE LYASE 18-RELATED"/>
    <property type="match status" value="1"/>
</dbReference>
<dbReference type="PANTHER" id="PTHR31683:SF18">
    <property type="entry name" value="PECTATE LYASE 21-RELATED"/>
    <property type="match status" value="1"/>
</dbReference>
<dbReference type="Pfam" id="PF00544">
    <property type="entry name" value="Pectate_lyase_4"/>
    <property type="match status" value="1"/>
</dbReference>
<dbReference type="SMART" id="SM00656">
    <property type="entry name" value="Amb_all"/>
    <property type="match status" value="1"/>
</dbReference>
<dbReference type="SUPFAM" id="SSF51126">
    <property type="entry name" value="Pectin lyase-like"/>
    <property type="match status" value="1"/>
</dbReference>